<protein>
    <recommendedName>
        <fullName evidence="1">Small ribosomal subunit protein uS8</fullName>
    </recommendedName>
    <alternativeName>
        <fullName evidence="2">30S ribosomal protein S8</fullName>
    </alternativeName>
</protein>
<reference key="1">
    <citation type="submission" date="2008-01" db="EMBL/GenBank/DDBJ databases">
        <title>Complete sequence of Shewanella halifaxensis HAW-EB4.</title>
        <authorList>
            <consortium name="US DOE Joint Genome Institute"/>
            <person name="Copeland A."/>
            <person name="Lucas S."/>
            <person name="Lapidus A."/>
            <person name="Glavina del Rio T."/>
            <person name="Dalin E."/>
            <person name="Tice H."/>
            <person name="Bruce D."/>
            <person name="Goodwin L."/>
            <person name="Pitluck S."/>
            <person name="Sims D."/>
            <person name="Brettin T."/>
            <person name="Detter J.C."/>
            <person name="Han C."/>
            <person name="Kuske C.R."/>
            <person name="Schmutz J."/>
            <person name="Larimer F."/>
            <person name="Land M."/>
            <person name="Hauser L."/>
            <person name="Kyrpides N."/>
            <person name="Kim E."/>
            <person name="Zhao J.-S."/>
            <person name="Richardson P."/>
        </authorList>
    </citation>
    <scope>NUCLEOTIDE SEQUENCE [LARGE SCALE GENOMIC DNA]</scope>
    <source>
        <strain>HAW-EB4</strain>
    </source>
</reference>
<name>RS8_SHEHH</name>
<gene>
    <name evidence="1" type="primary">rpsH</name>
    <name type="ordered locus">Shal_4120</name>
</gene>
<keyword id="KW-0687">Ribonucleoprotein</keyword>
<keyword id="KW-0689">Ribosomal protein</keyword>
<keyword id="KW-0694">RNA-binding</keyword>
<keyword id="KW-0699">rRNA-binding</keyword>
<proteinExistence type="inferred from homology"/>
<feature type="chain" id="PRO_1000085944" description="Small ribosomal subunit protein uS8">
    <location>
        <begin position="1"/>
        <end position="130"/>
    </location>
</feature>
<evidence type="ECO:0000255" key="1">
    <source>
        <dbReference type="HAMAP-Rule" id="MF_01302"/>
    </source>
</evidence>
<evidence type="ECO:0000305" key="2"/>
<organism>
    <name type="scientific">Shewanella halifaxensis (strain HAW-EB4)</name>
    <dbReference type="NCBI Taxonomy" id="458817"/>
    <lineage>
        <taxon>Bacteria</taxon>
        <taxon>Pseudomonadati</taxon>
        <taxon>Pseudomonadota</taxon>
        <taxon>Gammaproteobacteria</taxon>
        <taxon>Alteromonadales</taxon>
        <taxon>Shewanellaceae</taxon>
        <taxon>Shewanella</taxon>
    </lineage>
</organism>
<sequence length="130" mass="14213">MSMQDPIADMLTRIRNGQAAKHVSVKMPSAKLKIAIAQMLKEEGYITDYAVADEAKPELEITLKYFQGQPVVETIQRVSRPGLRIYKGKNELPKVMGGLGVAIVSTSKGLMTDRTARQNGMGGEVICYVA</sequence>
<accession>B0TLZ8</accession>
<comment type="function">
    <text evidence="1">One of the primary rRNA binding proteins, it binds directly to 16S rRNA central domain where it helps coordinate assembly of the platform of the 30S subunit.</text>
</comment>
<comment type="subunit">
    <text evidence="1">Part of the 30S ribosomal subunit. Contacts proteins S5 and S12.</text>
</comment>
<comment type="similarity">
    <text evidence="1">Belongs to the universal ribosomal protein uS8 family.</text>
</comment>
<dbReference type="EMBL" id="CP000931">
    <property type="protein sequence ID" value="ABZ78660.1"/>
    <property type="molecule type" value="Genomic_DNA"/>
</dbReference>
<dbReference type="RefSeq" id="WP_012279171.1">
    <property type="nucleotide sequence ID" value="NC_010334.1"/>
</dbReference>
<dbReference type="SMR" id="B0TLZ8"/>
<dbReference type="STRING" id="458817.Shal_4120"/>
<dbReference type="KEGG" id="shl:Shal_4120"/>
<dbReference type="eggNOG" id="COG0096">
    <property type="taxonomic scope" value="Bacteria"/>
</dbReference>
<dbReference type="HOGENOM" id="CLU_098428_0_0_6"/>
<dbReference type="OrthoDB" id="9802617at2"/>
<dbReference type="Proteomes" id="UP000001317">
    <property type="component" value="Chromosome"/>
</dbReference>
<dbReference type="GO" id="GO:1990904">
    <property type="term" value="C:ribonucleoprotein complex"/>
    <property type="evidence" value="ECO:0007669"/>
    <property type="project" value="UniProtKB-KW"/>
</dbReference>
<dbReference type="GO" id="GO:0005840">
    <property type="term" value="C:ribosome"/>
    <property type="evidence" value="ECO:0007669"/>
    <property type="project" value="UniProtKB-KW"/>
</dbReference>
<dbReference type="GO" id="GO:0019843">
    <property type="term" value="F:rRNA binding"/>
    <property type="evidence" value="ECO:0007669"/>
    <property type="project" value="UniProtKB-UniRule"/>
</dbReference>
<dbReference type="GO" id="GO:0003735">
    <property type="term" value="F:structural constituent of ribosome"/>
    <property type="evidence" value="ECO:0007669"/>
    <property type="project" value="InterPro"/>
</dbReference>
<dbReference type="GO" id="GO:0006412">
    <property type="term" value="P:translation"/>
    <property type="evidence" value="ECO:0007669"/>
    <property type="project" value="UniProtKB-UniRule"/>
</dbReference>
<dbReference type="FunFam" id="3.30.1370.30:FF:000003">
    <property type="entry name" value="30S ribosomal protein S8"/>
    <property type="match status" value="1"/>
</dbReference>
<dbReference type="FunFam" id="3.30.1490.10:FF:000001">
    <property type="entry name" value="30S ribosomal protein S8"/>
    <property type="match status" value="1"/>
</dbReference>
<dbReference type="Gene3D" id="3.30.1370.30">
    <property type="match status" value="1"/>
</dbReference>
<dbReference type="Gene3D" id="3.30.1490.10">
    <property type="match status" value="1"/>
</dbReference>
<dbReference type="HAMAP" id="MF_01302_B">
    <property type="entry name" value="Ribosomal_uS8_B"/>
    <property type="match status" value="1"/>
</dbReference>
<dbReference type="InterPro" id="IPR000630">
    <property type="entry name" value="Ribosomal_uS8"/>
</dbReference>
<dbReference type="InterPro" id="IPR047863">
    <property type="entry name" value="Ribosomal_uS8_CS"/>
</dbReference>
<dbReference type="InterPro" id="IPR035987">
    <property type="entry name" value="Ribosomal_uS8_sf"/>
</dbReference>
<dbReference type="NCBIfam" id="NF001109">
    <property type="entry name" value="PRK00136.1"/>
    <property type="match status" value="1"/>
</dbReference>
<dbReference type="PANTHER" id="PTHR11758">
    <property type="entry name" value="40S RIBOSOMAL PROTEIN S15A"/>
    <property type="match status" value="1"/>
</dbReference>
<dbReference type="Pfam" id="PF00410">
    <property type="entry name" value="Ribosomal_S8"/>
    <property type="match status" value="1"/>
</dbReference>
<dbReference type="SUPFAM" id="SSF56047">
    <property type="entry name" value="Ribosomal protein S8"/>
    <property type="match status" value="1"/>
</dbReference>
<dbReference type="PROSITE" id="PS00053">
    <property type="entry name" value="RIBOSOMAL_S8"/>
    <property type="match status" value="1"/>
</dbReference>